<dbReference type="EC" id="3.5.1.88" evidence="1"/>
<dbReference type="EMBL" id="AE002098">
    <property type="protein sequence ID" value="AAF40569.1"/>
    <property type="molecule type" value="Genomic_DNA"/>
</dbReference>
<dbReference type="PIR" id="E81238">
    <property type="entry name" value="E81238"/>
</dbReference>
<dbReference type="RefSeq" id="NP_273168.1">
    <property type="nucleotide sequence ID" value="NC_003112.2"/>
</dbReference>
<dbReference type="RefSeq" id="WP_002216218.1">
    <property type="nucleotide sequence ID" value="NC_003112.2"/>
</dbReference>
<dbReference type="SMR" id="P63916"/>
<dbReference type="FunCoup" id="P63916">
    <property type="interactions" value="467"/>
</dbReference>
<dbReference type="STRING" id="122586.NMB0110"/>
<dbReference type="PaxDb" id="122586-NMB0110"/>
<dbReference type="GeneID" id="93387182"/>
<dbReference type="KEGG" id="nme:NMB0110"/>
<dbReference type="PATRIC" id="fig|122586.8.peg.150"/>
<dbReference type="HOGENOM" id="CLU_061901_2_1_4"/>
<dbReference type="InParanoid" id="P63916"/>
<dbReference type="OrthoDB" id="9804313at2"/>
<dbReference type="Proteomes" id="UP000000425">
    <property type="component" value="Chromosome"/>
</dbReference>
<dbReference type="GO" id="GO:0046872">
    <property type="term" value="F:metal ion binding"/>
    <property type="evidence" value="ECO:0007669"/>
    <property type="project" value="UniProtKB-KW"/>
</dbReference>
<dbReference type="GO" id="GO:0042586">
    <property type="term" value="F:peptide deformylase activity"/>
    <property type="evidence" value="ECO:0000318"/>
    <property type="project" value="GO_Central"/>
</dbReference>
<dbReference type="GO" id="GO:0043686">
    <property type="term" value="P:co-translational protein modification"/>
    <property type="evidence" value="ECO:0000318"/>
    <property type="project" value="GO_Central"/>
</dbReference>
<dbReference type="GO" id="GO:0006412">
    <property type="term" value="P:translation"/>
    <property type="evidence" value="ECO:0007669"/>
    <property type="project" value="UniProtKB-UniRule"/>
</dbReference>
<dbReference type="CDD" id="cd00487">
    <property type="entry name" value="Pep_deformylase"/>
    <property type="match status" value="1"/>
</dbReference>
<dbReference type="FunFam" id="3.90.45.10:FF:000001">
    <property type="entry name" value="Peptide deformylase"/>
    <property type="match status" value="1"/>
</dbReference>
<dbReference type="Gene3D" id="3.90.45.10">
    <property type="entry name" value="Peptide deformylase"/>
    <property type="match status" value="1"/>
</dbReference>
<dbReference type="HAMAP" id="MF_00163">
    <property type="entry name" value="Pep_deformylase"/>
    <property type="match status" value="1"/>
</dbReference>
<dbReference type="InterPro" id="IPR023635">
    <property type="entry name" value="Peptide_deformylase"/>
</dbReference>
<dbReference type="InterPro" id="IPR036821">
    <property type="entry name" value="Peptide_deformylase_sf"/>
</dbReference>
<dbReference type="NCBIfam" id="TIGR00079">
    <property type="entry name" value="pept_deformyl"/>
    <property type="match status" value="1"/>
</dbReference>
<dbReference type="NCBIfam" id="NF001159">
    <property type="entry name" value="PRK00150.1-3"/>
    <property type="match status" value="1"/>
</dbReference>
<dbReference type="PANTHER" id="PTHR10458">
    <property type="entry name" value="PEPTIDE DEFORMYLASE"/>
    <property type="match status" value="1"/>
</dbReference>
<dbReference type="PANTHER" id="PTHR10458:SF22">
    <property type="entry name" value="PEPTIDE DEFORMYLASE"/>
    <property type="match status" value="1"/>
</dbReference>
<dbReference type="Pfam" id="PF01327">
    <property type="entry name" value="Pep_deformylase"/>
    <property type="match status" value="1"/>
</dbReference>
<dbReference type="PIRSF" id="PIRSF004749">
    <property type="entry name" value="Pep_def"/>
    <property type="match status" value="1"/>
</dbReference>
<dbReference type="PRINTS" id="PR01576">
    <property type="entry name" value="PDEFORMYLASE"/>
</dbReference>
<dbReference type="SUPFAM" id="SSF56420">
    <property type="entry name" value="Peptide deformylase"/>
    <property type="match status" value="1"/>
</dbReference>
<protein>
    <recommendedName>
        <fullName evidence="1">Peptide deformylase</fullName>
        <shortName evidence="1">PDF</shortName>
        <ecNumber evidence="1">3.5.1.88</ecNumber>
    </recommendedName>
    <alternativeName>
        <fullName evidence="1">Polypeptide deformylase</fullName>
    </alternativeName>
</protein>
<feature type="chain" id="PRO_0000082808" description="Peptide deformylase">
    <location>
        <begin position="1"/>
        <end position="167"/>
    </location>
</feature>
<feature type="active site" evidence="1">
    <location>
        <position position="134"/>
    </location>
</feature>
<feature type="binding site" evidence="1">
    <location>
        <position position="91"/>
    </location>
    <ligand>
        <name>Fe cation</name>
        <dbReference type="ChEBI" id="CHEBI:24875"/>
    </ligand>
</feature>
<feature type="binding site" evidence="1">
    <location>
        <position position="133"/>
    </location>
    <ligand>
        <name>Fe cation</name>
        <dbReference type="ChEBI" id="CHEBI:24875"/>
    </ligand>
</feature>
<feature type="binding site" evidence="1">
    <location>
        <position position="137"/>
    </location>
    <ligand>
        <name>Fe cation</name>
        <dbReference type="ChEBI" id="CHEBI:24875"/>
    </ligand>
</feature>
<name>DEF_NEIMB</name>
<gene>
    <name evidence="1" type="primary">def</name>
    <name type="ordered locus">NMB0110</name>
</gene>
<sequence>MALLNILQYPDERLHTVAKPVEQVDERIRKLIADMFETMYESRGIGLAATQVDVHERVVVMDLTEDRSEPRVFINPVIVEKDGETTYEEGCLSVPGIYDTVTRAERVKVEALNEKGEKFTLEADGLLAICVQHELDHLMGIVFVERLSQLKQGRIKTKLKKRQKHTI</sequence>
<comment type="function">
    <text evidence="1">Removes the formyl group from the N-terminal Met of newly synthesized proteins. Requires at least a dipeptide for an efficient rate of reaction. N-terminal L-methionine is a prerequisite for activity but the enzyme has broad specificity at other positions.</text>
</comment>
<comment type="catalytic activity">
    <reaction evidence="1">
        <text>N-terminal N-formyl-L-methionyl-[peptide] + H2O = N-terminal L-methionyl-[peptide] + formate</text>
        <dbReference type="Rhea" id="RHEA:24420"/>
        <dbReference type="Rhea" id="RHEA-COMP:10639"/>
        <dbReference type="Rhea" id="RHEA-COMP:10640"/>
        <dbReference type="ChEBI" id="CHEBI:15377"/>
        <dbReference type="ChEBI" id="CHEBI:15740"/>
        <dbReference type="ChEBI" id="CHEBI:49298"/>
        <dbReference type="ChEBI" id="CHEBI:64731"/>
        <dbReference type="EC" id="3.5.1.88"/>
    </reaction>
</comment>
<comment type="cofactor">
    <cofactor evidence="1">
        <name>Fe(2+)</name>
        <dbReference type="ChEBI" id="CHEBI:29033"/>
    </cofactor>
    <text evidence="1">Binds 1 Fe(2+) ion.</text>
</comment>
<comment type="similarity">
    <text evidence="1">Belongs to the polypeptide deformylase family.</text>
</comment>
<organism>
    <name type="scientific">Neisseria meningitidis serogroup B (strain ATCC BAA-335 / MC58)</name>
    <dbReference type="NCBI Taxonomy" id="122586"/>
    <lineage>
        <taxon>Bacteria</taxon>
        <taxon>Pseudomonadati</taxon>
        <taxon>Pseudomonadota</taxon>
        <taxon>Betaproteobacteria</taxon>
        <taxon>Neisseriales</taxon>
        <taxon>Neisseriaceae</taxon>
        <taxon>Neisseria</taxon>
    </lineage>
</organism>
<evidence type="ECO:0000255" key="1">
    <source>
        <dbReference type="HAMAP-Rule" id="MF_00163"/>
    </source>
</evidence>
<keyword id="KW-0378">Hydrolase</keyword>
<keyword id="KW-0408">Iron</keyword>
<keyword id="KW-0479">Metal-binding</keyword>
<keyword id="KW-0648">Protein biosynthesis</keyword>
<keyword id="KW-1185">Reference proteome</keyword>
<reference key="1">
    <citation type="journal article" date="2000" name="Science">
        <title>Complete genome sequence of Neisseria meningitidis serogroup B strain MC58.</title>
        <authorList>
            <person name="Tettelin H."/>
            <person name="Saunders N.J."/>
            <person name="Heidelberg J.F."/>
            <person name="Jeffries A.C."/>
            <person name="Nelson K.E."/>
            <person name="Eisen J.A."/>
            <person name="Ketchum K.A."/>
            <person name="Hood D.W."/>
            <person name="Peden J.F."/>
            <person name="Dodson R.J."/>
            <person name="Nelson W.C."/>
            <person name="Gwinn M.L."/>
            <person name="DeBoy R.T."/>
            <person name="Peterson J.D."/>
            <person name="Hickey E.K."/>
            <person name="Haft D.H."/>
            <person name="Salzberg S.L."/>
            <person name="White O."/>
            <person name="Fleischmann R.D."/>
            <person name="Dougherty B.A."/>
            <person name="Mason T.M."/>
            <person name="Ciecko A."/>
            <person name="Parksey D.S."/>
            <person name="Blair E."/>
            <person name="Cittone H."/>
            <person name="Clark E.B."/>
            <person name="Cotton M.D."/>
            <person name="Utterback T.R."/>
            <person name="Khouri H.M."/>
            <person name="Qin H."/>
            <person name="Vamathevan J.J."/>
            <person name="Gill J."/>
            <person name="Scarlato V."/>
            <person name="Masignani V."/>
            <person name="Pizza M."/>
            <person name="Grandi G."/>
            <person name="Sun L."/>
            <person name="Smith H.O."/>
            <person name="Fraser C.M."/>
            <person name="Moxon E.R."/>
            <person name="Rappuoli R."/>
            <person name="Venter J.C."/>
        </authorList>
    </citation>
    <scope>NUCLEOTIDE SEQUENCE [LARGE SCALE GENOMIC DNA]</scope>
    <source>
        <strain>ATCC BAA-335 / MC58</strain>
    </source>
</reference>
<proteinExistence type="inferred from homology"/>
<accession>P63916</accession>
<accession>Q9JQN0</accession>